<keyword id="KW-0963">Cytoplasm</keyword>
<keyword id="KW-0539">Nucleus</keyword>
<keyword id="KW-0597">Phosphoprotein</keyword>
<keyword id="KW-1185">Reference proteome</keyword>
<keyword id="KW-0833">Ubl conjugation pathway</keyword>
<accession>O74485</accession>
<name>CUE3_SCHPO</name>
<gene>
    <name evidence="6" type="primary">cue3</name>
    <name evidence="6" type="ORF">SPCC1906.02c</name>
</gene>
<proteinExistence type="evidence at protein level"/>
<comment type="function">
    <text evidence="1">Involved in activation of the ribosome quality control (RQC) pathway, a pathway that degrades nascent peptide chains during problematic translation. Specifically recognizes and binds RPS20/uS10 ubiquitinated by HEL2, promoting recruitment of the RQT (ribosome quality control trigger) complex on stalled ribosomes, followed by disassembly of stalled ribosomes.</text>
</comment>
<comment type="subunit">
    <text evidence="1">Component of the RQT (ribosome quality control trigger) complex.</text>
</comment>
<comment type="subcellular location">
    <subcellularLocation>
        <location evidence="4">Cytoplasm</location>
    </subcellularLocation>
    <subcellularLocation>
        <location evidence="4">Nucleus</location>
    </subcellularLocation>
</comment>
<comment type="domain">
    <text evidence="1">The CUE domain specifically binds RPS20/uS10 ubiquitinated by HEL2.</text>
</comment>
<feature type="chain" id="PRO_0000310343" description="CUE domain-containing protein 3">
    <location>
        <begin position="1"/>
        <end position="581"/>
    </location>
</feature>
<feature type="domain" description="CUE" evidence="2">
    <location>
        <begin position="271"/>
        <end position="314"/>
    </location>
</feature>
<feature type="region of interest" description="Disordered" evidence="3">
    <location>
        <begin position="422"/>
        <end position="448"/>
    </location>
</feature>
<feature type="region of interest" description="Disordered" evidence="3">
    <location>
        <begin position="522"/>
        <end position="581"/>
    </location>
</feature>
<feature type="compositionally biased region" description="Polar residues" evidence="3">
    <location>
        <begin position="522"/>
        <end position="542"/>
    </location>
</feature>
<feature type="compositionally biased region" description="Basic residues" evidence="3">
    <location>
        <begin position="552"/>
        <end position="581"/>
    </location>
</feature>
<feature type="modified residue" description="Phosphotyrosine" evidence="5">
    <location>
        <position position="386"/>
    </location>
</feature>
<evidence type="ECO:0000250" key="1">
    <source>
        <dbReference type="UniProtKB" id="P53137"/>
    </source>
</evidence>
<evidence type="ECO:0000255" key="2">
    <source>
        <dbReference type="PROSITE-ProRule" id="PRU00468"/>
    </source>
</evidence>
<evidence type="ECO:0000256" key="3">
    <source>
        <dbReference type="SAM" id="MobiDB-lite"/>
    </source>
</evidence>
<evidence type="ECO:0000269" key="4">
    <source>
    </source>
</evidence>
<evidence type="ECO:0000269" key="5">
    <source>
    </source>
</evidence>
<evidence type="ECO:0000312" key="6">
    <source>
        <dbReference type="PomBase" id="SPCC1906.02c"/>
    </source>
</evidence>
<sequence>MSENVISSSKNVVSKLLYVKDEYWPSVAPAATELISKLINAFWCQTLNGQLVEEDEGERNCIFLFDRCLKTEGCLKKIGPVTVMQFLACFLLSSQNHAYAWSVCRQIPSDDMAFKFTKCFQNSQQFRDANFCKLVLVWTVCQCVSSTVYYPAILDLLPVLSDLVKEMEKDPASLQAKENEFWLKKLIQTSLHHSSDNSLVFYLEMLLDSLDLRNCIYVVFEDEALFRRLKDIGNPEIRMMLDSGLRDWRKQRSGRSSSHVASKGINKVVNINPGDVKSLIELFPQLSVEEAVEHLSASLGNIDAACESVITSSLPEELDSSTHSPIYTKPNVDSMHKQPKKAIAPLSLSSSVTAVISNRTSDKKTRSTVAEEDDITHLNISPDRLYLNKKPEDLNFWKKSVPETDKSRVLNLLAMAEDDEYDDTYDDLDTTGPVDSGVGDDDPEASSKDAHDFQKFINQTLYDFYQQNPEVFDQKARKSKERADLLAKLDNSLTHEQIEGWRRMFTTDSKFAEAVKKEVTFGSGNTNIGSLRQTKFKQSNYTPPELNDGSRQHRPSRPSKNPSLKKKKYVRTKPKKASNEK</sequence>
<reference key="1">
    <citation type="journal article" date="2002" name="Nature">
        <title>The genome sequence of Schizosaccharomyces pombe.</title>
        <authorList>
            <person name="Wood V."/>
            <person name="Gwilliam R."/>
            <person name="Rajandream M.A."/>
            <person name="Lyne M.H."/>
            <person name="Lyne R."/>
            <person name="Stewart A."/>
            <person name="Sgouros J.G."/>
            <person name="Peat N."/>
            <person name="Hayles J."/>
            <person name="Baker S.G."/>
            <person name="Basham D."/>
            <person name="Bowman S."/>
            <person name="Brooks K."/>
            <person name="Brown D."/>
            <person name="Brown S."/>
            <person name="Chillingworth T."/>
            <person name="Churcher C.M."/>
            <person name="Collins M."/>
            <person name="Connor R."/>
            <person name="Cronin A."/>
            <person name="Davis P."/>
            <person name="Feltwell T."/>
            <person name="Fraser A."/>
            <person name="Gentles S."/>
            <person name="Goble A."/>
            <person name="Hamlin N."/>
            <person name="Harris D.E."/>
            <person name="Hidalgo J."/>
            <person name="Hodgson G."/>
            <person name="Holroyd S."/>
            <person name="Hornsby T."/>
            <person name="Howarth S."/>
            <person name="Huckle E.J."/>
            <person name="Hunt S."/>
            <person name="Jagels K."/>
            <person name="James K.D."/>
            <person name="Jones L."/>
            <person name="Jones M."/>
            <person name="Leather S."/>
            <person name="McDonald S."/>
            <person name="McLean J."/>
            <person name="Mooney P."/>
            <person name="Moule S."/>
            <person name="Mungall K.L."/>
            <person name="Murphy L.D."/>
            <person name="Niblett D."/>
            <person name="Odell C."/>
            <person name="Oliver K."/>
            <person name="O'Neil S."/>
            <person name="Pearson D."/>
            <person name="Quail M.A."/>
            <person name="Rabbinowitsch E."/>
            <person name="Rutherford K.M."/>
            <person name="Rutter S."/>
            <person name="Saunders D."/>
            <person name="Seeger K."/>
            <person name="Sharp S."/>
            <person name="Skelton J."/>
            <person name="Simmonds M.N."/>
            <person name="Squares R."/>
            <person name="Squares S."/>
            <person name="Stevens K."/>
            <person name="Taylor K."/>
            <person name="Taylor R.G."/>
            <person name="Tivey A."/>
            <person name="Walsh S.V."/>
            <person name="Warren T."/>
            <person name="Whitehead S."/>
            <person name="Woodward J.R."/>
            <person name="Volckaert G."/>
            <person name="Aert R."/>
            <person name="Robben J."/>
            <person name="Grymonprez B."/>
            <person name="Weltjens I."/>
            <person name="Vanstreels E."/>
            <person name="Rieger M."/>
            <person name="Schaefer M."/>
            <person name="Mueller-Auer S."/>
            <person name="Gabel C."/>
            <person name="Fuchs M."/>
            <person name="Duesterhoeft A."/>
            <person name="Fritzc C."/>
            <person name="Holzer E."/>
            <person name="Moestl D."/>
            <person name="Hilbert H."/>
            <person name="Borzym K."/>
            <person name="Langer I."/>
            <person name="Beck A."/>
            <person name="Lehrach H."/>
            <person name="Reinhardt R."/>
            <person name="Pohl T.M."/>
            <person name="Eger P."/>
            <person name="Zimmermann W."/>
            <person name="Wedler H."/>
            <person name="Wambutt R."/>
            <person name="Purnelle B."/>
            <person name="Goffeau A."/>
            <person name="Cadieu E."/>
            <person name="Dreano S."/>
            <person name="Gloux S."/>
            <person name="Lelaure V."/>
            <person name="Mottier S."/>
            <person name="Galibert F."/>
            <person name="Aves S.J."/>
            <person name="Xiang Z."/>
            <person name="Hunt C."/>
            <person name="Moore K."/>
            <person name="Hurst S.M."/>
            <person name="Lucas M."/>
            <person name="Rochet M."/>
            <person name="Gaillardin C."/>
            <person name="Tallada V.A."/>
            <person name="Garzon A."/>
            <person name="Thode G."/>
            <person name="Daga R.R."/>
            <person name="Cruzado L."/>
            <person name="Jimenez J."/>
            <person name="Sanchez M."/>
            <person name="del Rey F."/>
            <person name="Benito J."/>
            <person name="Dominguez A."/>
            <person name="Revuelta J.L."/>
            <person name="Moreno S."/>
            <person name="Armstrong J."/>
            <person name="Forsburg S.L."/>
            <person name="Cerutti L."/>
            <person name="Lowe T."/>
            <person name="McCombie W.R."/>
            <person name="Paulsen I."/>
            <person name="Potashkin J."/>
            <person name="Shpakovski G.V."/>
            <person name="Ussery D."/>
            <person name="Barrell B.G."/>
            <person name="Nurse P."/>
        </authorList>
    </citation>
    <scope>NUCLEOTIDE SEQUENCE [LARGE SCALE GENOMIC DNA]</scope>
    <source>
        <strain>972 / ATCC 24843</strain>
    </source>
</reference>
<reference key="2">
    <citation type="journal article" date="2006" name="Nat. Biotechnol.">
        <title>ORFeome cloning and global analysis of protein localization in the fission yeast Schizosaccharomyces pombe.</title>
        <authorList>
            <person name="Matsuyama A."/>
            <person name="Arai R."/>
            <person name="Yashiroda Y."/>
            <person name="Shirai A."/>
            <person name="Kamata A."/>
            <person name="Sekido S."/>
            <person name="Kobayashi Y."/>
            <person name="Hashimoto A."/>
            <person name="Hamamoto M."/>
            <person name="Hiraoka Y."/>
            <person name="Horinouchi S."/>
            <person name="Yoshida M."/>
        </authorList>
    </citation>
    <scope>SUBCELLULAR LOCATION [LARGE SCALE ANALYSIS]</scope>
</reference>
<reference key="3">
    <citation type="journal article" date="2008" name="J. Proteome Res.">
        <title>Phosphoproteome analysis of fission yeast.</title>
        <authorList>
            <person name="Wilson-Grady J.T."/>
            <person name="Villen J."/>
            <person name="Gygi S.P."/>
        </authorList>
    </citation>
    <scope>PHOSPHORYLATION [LARGE SCALE ANALYSIS] AT TYR-386</scope>
    <scope>IDENTIFICATION BY MASS SPECTROMETRY</scope>
</reference>
<dbReference type="EMBL" id="CU329672">
    <property type="protein sequence ID" value="CAA20771.1"/>
    <property type="molecule type" value="Genomic_DNA"/>
</dbReference>
<dbReference type="PIR" id="T41210">
    <property type="entry name" value="T41210"/>
</dbReference>
<dbReference type="RefSeq" id="NP_588406.1">
    <property type="nucleotide sequence ID" value="NM_001023397.2"/>
</dbReference>
<dbReference type="BioGRID" id="275347">
    <property type="interactions" value="1"/>
</dbReference>
<dbReference type="FunCoup" id="O74485">
    <property type="interactions" value="47"/>
</dbReference>
<dbReference type="IntAct" id="O74485">
    <property type="interactions" value="1"/>
</dbReference>
<dbReference type="STRING" id="284812.O74485"/>
<dbReference type="iPTMnet" id="O74485"/>
<dbReference type="PaxDb" id="4896-SPCC1906.02c.1"/>
<dbReference type="EnsemblFungi" id="SPCC1906.02c.1">
    <property type="protein sequence ID" value="SPCC1906.02c.1:pep"/>
    <property type="gene ID" value="SPCC1906.02c"/>
</dbReference>
<dbReference type="GeneID" id="2538764"/>
<dbReference type="KEGG" id="spo:2538764"/>
<dbReference type="PomBase" id="SPCC1906.02c">
    <property type="gene designation" value="cue3"/>
</dbReference>
<dbReference type="VEuPathDB" id="FungiDB:SPCC1906.02c"/>
<dbReference type="eggNOG" id="KOG4501">
    <property type="taxonomic scope" value="Eukaryota"/>
</dbReference>
<dbReference type="HOGENOM" id="CLU_483252_0_0_1"/>
<dbReference type="InParanoid" id="O74485"/>
<dbReference type="OMA" id="MFLDSHE"/>
<dbReference type="PRO" id="PR:O74485"/>
<dbReference type="Proteomes" id="UP000002485">
    <property type="component" value="Chromosome III"/>
</dbReference>
<dbReference type="GO" id="GO:0005829">
    <property type="term" value="C:cytosol"/>
    <property type="evidence" value="ECO:0007005"/>
    <property type="project" value="PomBase"/>
</dbReference>
<dbReference type="GO" id="GO:0005634">
    <property type="term" value="C:nucleus"/>
    <property type="evidence" value="ECO:0007669"/>
    <property type="project" value="UniProtKB-SubCell"/>
</dbReference>
<dbReference type="GO" id="GO:0180022">
    <property type="term" value="C:RQC-trigger complex"/>
    <property type="evidence" value="ECO:0000304"/>
    <property type="project" value="PomBase"/>
</dbReference>
<dbReference type="GO" id="GO:0043130">
    <property type="term" value="F:ubiquitin binding"/>
    <property type="evidence" value="ECO:0007669"/>
    <property type="project" value="InterPro"/>
</dbReference>
<dbReference type="GO" id="GO:0072344">
    <property type="term" value="P:rescue of stalled ribosome"/>
    <property type="evidence" value="ECO:0000266"/>
    <property type="project" value="PomBase"/>
</dbReference>
<dbReference type="CDD" id="cd14424">
    <property type="entry name" value="CUE_Cue1p_like"/>
    <property type="match status" value="1"/>
</dbReference>
<dbReference type="InterPro" id="IPR003892">
    <property type="entry name" value="CUE"/>
</dbReference>
<dbReference type="PANTHER" id="PTHR12493">
    <property type="entry name" value="CUE DOMAIN CONTAINING 2"/>
    <property type="match status" value="1"/>
</dbReference>
<dbReference type="PANTHER" id="PTHR12493:SF0">
    <property type="entry name" value="CUE DOMAIN-CONTAINING PROTEIN 2"/>
    <property type="match status" value="1"/>
</dbReference>
<dbReference type="Pfam" id="PF02845">
    <property type="entry name" value="CUE"/>
    <property type="match status" value="1"/>
</dbReference>
<dbReference type="SMART" id="SM00546">
    <property type="entry name" value="CUE"/>
    <property type="match status" value="1"/>
</dbReference>
<dbReference type="PROSITE" id="PS51140">
    <property type="entry name" value="CUE"/>
    <property type="match status" value="1"/>
</dbReference>
<organism>
    <name type="scientific">Schizosaccharomyces pombe (strain 972 / ATCC 24843)</name>
    <name type="common">Fission yeast</name>
    <dbReference type="NCBI Taxonomy" id="284812"/>
    <lineage>
        <taxon>Eukaryota</taxon>
        <taxon>Fungi</taxon>
        <taxon>Dikarya</taxon>
        <taxon>Ascomycota</taxon>
        <taxon>Taphrinomycotina</taxon>
        <taxon>Schizosaccharomycetes</taxon>
        <taxon>Schizosaccharomycetales</taxon>
        <taxon>Schizosaccharomycetaceae</taxon>
        <taxon>Schizosaccharomyces</taxon>
    </lineage>
</organism>
<protein>
    <recommendedName>
        <fullName>CUE domain-containing protein 3</fullName>
    </recommendedName>
</protein>